<gene>
    <name type="ordered locus">YML096W</name>
</gene>
<evidence type="ECO:0000250" key="1"/>
<evidence type="ECO:0000255" key="2">
    <source>
        <dbReference type="PROSITE-ProRule" id="PRU00609"/>
    </source>
</evidence>
<evidence type="ECO:0000256" key="3">
    <source>
        <dbReference type="SAM" id="MobiDB-lite"/>
    </source>
</evidence>
<evidence type="ECO:0000269" key="4">
    <source>
    </source>
</evidence>
<evidence type="ECO:0000269" key="5">
    <source>
    </source>
</evidence>
<sequence>MCGILLHYCPNNNYLNDELIEFPEGTEFGDTTCTNESSIFNKIIPYIAARGPNYSSLRAVKAYRISWFSSVLSLRQPFTKQSINVDDRYFLQFNGELYNKEISQGDNDSLYIASMLQNLKEGMGVIDVIKSLEGEYAYTIYDVNSSKLYFGRDPIGRRSLSYSVTPDNELYVASVTGSAGSFQDCIGGVIYEYDTRTKLLNSNQRSHLPYEVTSEIDLNFTSLSEVSKNLYAVLRDSVKKRVESIHPRHIENSPIAVLFSGGIDCSVIVALICEVLQENDYKCGKPVIELLNVSFENPRTGLFPSDTPDRKLSINSAKTLQNLYPNVDIKLVEVDVPYDEYLKWKPFVINLMYPKQTEMDLSIAIAFFFASRGRGFLTSLNGERTPYQRHGIVLFSGLGADELYGGYHKFANKPPHELVEELTRQINNIYDRNLNRDDKVIAHNGVEVRYPFLDEYVIKLSTAEIPINFKVNKLILRKVASQYLKLDGISSEPKRAIQFGAKSAKMTKDGNKHGTDLLKENRNCS</sequence>
<name>ASND1_YEAST</name>
<organism>
    <name type="scientific">Saccharomyces cerevisiae (strain ATCC 204508 / S288c)</name>
    <name type="common">Baker's yeast</name>
    <dbReference type="NCBI Taxonomy" id="559292"/>
    <lineage>
        <taxon>Eukaryota</taxon>
        <taxon>Fungi</taxon>
        <taxon>Dikarya</taxon>
        <taxon>Ascomycota</taxon>
        <taxon>Saccharomycotina</taxon>
        <taxon>Saccharomycetes</taxon>
        <taxon>Saccharomycetales</taxon>
        <taxon>Saccharomycetaceae</taxon>
        <taxon>Saccharomyces</taxon>
    </lineage>
</organism>
<proteinExistence type="evidence at protein level"/>
<reference key="1">
    <citation type="journal article" date="1997" name="Nature">
        <title>The nucleotide sequence of Saccharomyces cerevisiae chromosome XIII.</title>
        <authorList>
            <person name="Bowman S."/>
            <person name="Churcher C.M."/>
            <person name="Badcock K."/>
            <person name="Brown D."/>
            <person name="Chillingworth T."/>
            <person name="Connor R."/>
            <person name="Dedman K."/>
            <person name="Devlin K."/>
            <person name="Gentles S."/>
            <person name="Hamlin N."/>
            <person name="Hunt S."/>
            <person name="Jagels K."/>
            <person name="Lye G."/>
            <person name="Moule S."/>
            <person name="Odell C."/>
            <person name="Pearson D."/>
            <person name="Rajandream M.A."/>
            <person name="Rice P."/>
            <person name="Skelton J."/>
            <person name="Walsh S.V."/>
            <person name="Whitehead S."/>
            <person name="Barrell B.G."/>
        </authorList>
    </citation>
    <scope>NUCLEOTIDE SEQUENCE [LARGE SCALE GENOMIC DNA]</scope>
    <source>
        <strain>ATCC 204508 / S288c</strain>
    </source>
</reference>
<reference key="2">
    <citation type="journal article" date="2014" name="G3 (Bethesda)">
        <title>The reference genome sequence of Saccharomyces cerevisiae: Then and now.</title>
        <authorList>
            <person name="Engel S.R."/>
            <person name="Dietrich F.S."/>
            <person name="Fisk D.G."/>
            <person name="Binkley G."/>
            <person name="Balakrishnan R."/>
            <person name="Costanzo M.C."/>
            <person name="Dwight S.S."/>
            <person name="Hitz B.C."/>
            <person name="Karra K."/>
            <person name="Nash R.S."/>
            <person name="Weng S."/>
            <person name="Wong E.D."/>
            <person name="Lloyd P."/>
            <person name="Skrzypek M.S."/>
            <person name="Miyasato S.R."/>
            <person name="Simison M."/>
            <person name="Cherry J.M."/>
        </authorList>
    </citation>
    <scope>GENOME REANNOTATION</scope>
    <source>
        <strain>ATCC 204508 / S288c</strain>
    </source>
</reference>
<reference key="3">
    <citation type="journal article" date="2003" name="Nature">
        <title>Global analysis of protein localization in budding yeast.</title>
        <authorList>
            <person name="Huh W.-K."/>
            <person name="Falvo J.V."/>
            <person name="Gerke L.C."/>
            <person name="Carroll A.S."/>
            <person name="Howson R.W."/>
            <person name="Weissman J.S."/>
            <person name="O'Shea E.K."/>
        </authorList>
    </citation>
    <scope>SUBCELLULAR LOCATION [LARGE SCALE ANALYSIS]</scope>
</reference>
<reference key="4">
    <citation type="journal article" date="2003" name="Nature">
        <title>Global analysis of protein expression in yeast.</title>
        <authorList>
            <person name="Ghaemmaghami S."/>
            <person name="Huh W.-K."/>
            <person name="Bower K."/>
            <person name="Howson R.W."/>
            <person name="Belle A."/>
            <person name="Dephoure N."/>
            <person name="O'Shea E.K."/>
            <person name="Weissman J.S."/>
        </authorList>
    </citation>
    <scope>LEVEL OF PROTEIN EXPRESSION [LARGE SCALE ANALYSIS]</scope>
</reference>
<comment type="subcellular location">
    <subcellularLocation>
        <location evidence="4">Cytoplasm</location>
    </subcellularLocation>
</comment>
<comment type="miscellaneous">
    <text evidence="5">Present with 3750 molecules/cell in log phase SD medium.</text>
</comment>
<feature type="initiator methionine" description="Removed" evidence="1">
    <location>
        <position position="1"/>
    </location>
</feature>
<feature type="chain" id="PRO_0000056940" description="Asparagine synthetase domain-containing protein YML096W">
    <location>
        <begin position="2"/>
        <end position="525"/>
    </location>
</feature>
<feature type="domain" description="Glutamine amidotransferase type-2" evidence="2">
    <location>
        <begin position="2"/>
        <end position="209"/>
    </location>
</feature>
<feature type="domain" description="Asparagine synthetase">
    <location>
        <begin position="210"/>
        <end position="523"/>
    </location>
</feature>
<feature type="region of interest" description="Disordered" evidence="3">
    <location>
        <begin position="503"/>
        <end position="525"/>
    </location>
</feature>
<feature type="compositionally biased region" description="Basic and acidic residues" evidence="3">
    <location>
        <begin position="506"/>
        <end position="525"/>
    </location>
</feature>
<feature type="active site" description="For GATase activity" evidence="1">
    <location>
        <position position="2"/>
    </location>
</feature>
<accession>Q04489</accession>
<accession>D6W0I9</accession>
<protein>
    <recommendedName>
        <fullName>Asparagine synthetase domain-containing protein YML096W</fullName>
    </recommendedName>
</protein>
<keyword id="KW-0028">Amino-acid biosynthesis</keyword>
<keyword id="KW-0061">Asparagine biosynthesis</keyword>
<keyword id="KW-0963">Cytoplasm</keyword>
<keyword id="KW-0315">Glutamine amidotransferase</keyword>
<keyword id="KW-1185">Reference proteome</keyword>
<dbReference type="EMBL" id="Z46660">
    <property type="protein sequence ID" value="CAA86641.1"/>
    <property type="molecule type" value="Genomic_DNA"/>
</dbReference>
<dbReference type="EMBL" id="BK006946">
    <property type="protein sequence ID" value="DAA09803.1"/>
    <property type="molecule type" value="Genomic_DNA"/>
</dbReference>
<dbReference type="PIR" id="S49630">
    <property type="entry name" value="S49630"/>
</dbReference>
<dbReference type="RefSeq" id="NP_013613.1">
    <property type="nucleotide sequence ID" value="NM_001182456.1"/>
</dbReference>
<dbReference type="SMR" id="Q04489"/>
<dbReference type="BioGRID" id="35047">
    <property type="interactions" value="65"/>
</dbReference>
<dbReference type="FunCoup" id="Q04489">
    <property type="interactions" value="828"/>
</dbReference>
<dbReference type="IntAct" id="Q04489">
    <property type="interactions" value="2"/>
</dbReference>
<dbReference type="STRING" id="4932.YML096W"/>
<dbReference type="iPTMnet" id="Q04489"/>
<dbReference type="PaxDb" id="4932-YML096W"/>
<dbReference type="PeptideAtlas" id="Q04489"/>
<dbReference type="EnsemblFungi" id="YML096W_mRNA">
    <property type="protein sequence ID" value="YML096W"/>
    <property type="gene ID" value="YML096W"/>
</dbReference>
<dbReference type="GeneID" id="854877"/>
<dbReference type="KEGG" id="sce:YML096W"/>
<dbReference type="AGR" id="SGD:S000004562"/>
<dbReference type="SGD" id="S000004562">
    <property type="gene designation" value="YML096W"/>
</dbReference>
<dbReference type="VEuPathDB" id="FungiDB:YML096W"/>
<dbReference type="eggNOG" id="KOG0573">
    <property type="taxonomic scope" value="Eukaryota"/>
</dbReference>
<dbReference type="GeneTree" id="ENSGT00390000012446"/>
<dbReference type="HOGENOM" id="CLU_012368_2_0_1"/>
<dbReference type="InParanoid" id="Q04489"/>
<dbReference type="OMA" id="HAKICIL"/>
<dbReference type="OrthoDB" id="10252281at2759"/>
<dbReference type="BioCyc" id="YEAST:G3O-32681-MONOMER"/>
<dbReference type="BioGRID-ORCS" id="854877">
    <property type="hits" value="0 hits in 10 CRISPR screens"/>
</dbReference>
<dbReference type="PRO" id="PR:Q04489"/>
<dbReference type="Proteomes" id="UP000002311">
    <property type="component" value="Chromosome XIII"/>
</dbReference>
<dbReference type="RNAct" id="Q04489">
    <property type="molecule type" value="protein"/>
</dbReference>
<dbReference type="GO" id="GO:0005737">
    <property type="term" value="C:cytoplasm"/>
    <property type="evidence" value="ECO:0007005"/>
    <property type="project" value="SGD"/>
</dbReference>
<dbReference type="GO" id="GO:0004066">
    <property type="term" value="F:asparagine synthase (glutamine-hydrolyzing) activity"/>
    <property type="evidence" value="ECO:0007669"/>
    <property type="project" value="InterPro"/>
</dbReference>
<dbReference type="GO" id="GO:0006529">
    <property type="term" value="P:asparagine biosynthetic process"/>
    <property type="evidence" value="ECO:0007669"/>
    <property type="project" value="UniProtKB-KW"/>
</dbReference>
<dbReference type="CDD" id="cd01991">
    <property type="entry name" value="Asn_synthase_B_C"/>
    <property type="match status" value="1"/>
</dbReference>
<dbReference type="CDD" id="cd03766">
    <property type="entry name" value="Gn_AT_II_novel"/>
    <property type="match status" value="1"/>
</dbReference>
<dbReference type="FunFam" id="3.60.20.10:FF:000104">
    <property type="entry name" value="YML096W-like protein"/>
    <property type="match status" value="1"/>
</dbReference>
<dbReference type="Gene3D" id="3.60.20.10">
    <property type="entry name" value="Glutamine Phosphoribosylpyrophosphate, subunit 1, domain 1"/>
    <property type="match status" value="1"/>
</dbReference>
<dbReference type="Gene3D" id="3.40.50.620">
    <property type="entry name" value="HUPs"/>
    <property type="match status" value="1"/>
</dbReference>
<dbReference type="InterPro" id="IPR001962">
    <property type="entry name" value="Asn_synthase"/>
</dbReference>
<dbReference type="InterPro" id="IPR051857">
    <property type="entry name" value="Asn_synthetase_domain"/>
</dbReference>
<dbReference type="InterPro" id="IPR017932">
    <property type="entry name" value="GATase_2_dom"/>
</dbReference>
<dbReference type="InterPro" id="IPR029055">
    <property type="entry name" value="Ntn_hydrolases_N"/>
</dbReference>
<dbReference type="InterPro" id="IPR014729">
    <property type="entry name" value="Rossmann-like_a/b/a_fold"/>
</dbReference>
<dbReference type="PANTHER" id="PTHR45937">
    <property type="entry name" value="ASPARAGINE SYNTHETASE DOMAIN-CONTAINING PROTEIN 1"/>
    <property type="match status" value="1"/>
</dbReference>
<dbReference type="PANTHER" id="PTHR45937:SF1">
    <property type="entry name" value="ASPARAGINE SYNTHETASE DOMAIN-CONTAINING PROTEIN 1"/>
    <property type="match status" value="1"/>
</dbReference>
<dbReference type="Pfam" id="PF00733">
    <property type="entry name" value="Asn_synthase"/>
    <property type="match status" value="1"/>
</dbReference>
<dbReference type="Pfam" id="PF13537">
    <property type="entry name" value="GATase_7"/>
    <property type="match status" value="1"/>
</dbReference>
<dbReference type="SUPFAM" id="SSF52402">
    <property type="entry name" value="Adenine nucleotide alpha hydrolases-like"/>
    <property type="match status" value="1"/>
</dbReference>
<dbReference type="SUPFAM" id="SSF56235">
    <property type="entry name" value="N-terminal nucleophile aminohydrolases (Ntn hydrolases)"/>
    <property type="match status" value="1"/>
</dbReference>
<dbReference type="PROSITE" id="PS51278">
    <property type="entry name" value="GATASE_TYPE_2"/>
    <property type="match status" value="1"/>
</dbReference>